<keyword id="KW-0963">Cytoplasm</keyword>
<keyword id="KW-0396">Initiation factor</keyword>
<keyword id="KW-0648">Protein biosynthesis</keyword>
<keyword id="KW-1185">Reference proteome</keyword>
<keyword id="KW-0694">RNA-binding</keyword>
<keyword id="KW-0699">rRNA-binding</keyword>
<reference key="1">
    <citation type="journal article" date="2005" name="J. Bacteriol.">
        <title>Complete genome sequence and analysis of the multiresistant nosocomial pathogen Corynebacterium jeikeium K411, a lipid-requiring bacterium of the human skin flora.</title>
        <authorList>
            <person name="Tauch A."/>
            <person name="Kaiser O."/>
            <person name="Hain T."/>
            <person name="Goesmann A."/>
            <person name="Weisshaar B."/>
            <person name="Albersmeier A."/>
            <person name="Bekel T."/>
            <person name="Bischoff N."/>
            <person name="Brune I."/>
            <person name="Chakraborty T."/>
            <person name="Kalinowski J."/>
            <person name="Meyer F."/>
            <person name="Rupp O."/>
            <person name="Schneiker S."/>
            <person name="Viehoever P."/>
            <person name="Puehler A."/>
        </authorList>
    </citation>
    <scope>NUCLEOTIDE SEQUENCE [LARGE SCALE GENOMIC DNA]</scope>
    <source>
        <strain>K411</strain>
    </source>
</reference>
<feature type="chain" id="PRO_0000263789" description="Translation initiation factor IF-1">
    <location>
        <begin position="1"/>
        <end position="72"/>
    </location>
</feature>
<feature type="domain" description="S1-like" evidence="1">
    <location>
        <begin position="1"/>
        <end position="72"/>
    </location>
</feature>
<protein>
    <recommendedName>
        <fullName evidence="1">Translation initiation factor IF-1</fullName>
    </recommendedName>
</protein>
<name>IF1_CORJK</name>
<accession>Q4JTB8</accession>
<sequence length="72" mass="8375">MAKEGAIEVEGRIVEPLPNAMFRVELDNGHKVLAHISGKMRQHYIRILPEDRVVVELSPYDLTRGRIVYRYK</sequence>
<gene>
    <name evidence="1" type="primary">infA</name>
    <name type="ordered locus">jk1762</name>
</gene>
<evidence type="ECO:0000255" key="1">
    <source>
        <dbReference type="HAMAP-Rule" id="MF_00075"/>
    </source>
</evidence>
<evidence type="ECO:0000305" key="2"/>
<organism>
    <name type="scientific">Corynebacterium jeikeium (strain K411)</name>
    <dbReference type="NCBI Taxonomy" id="306537"/>
    <lineage>
        <taxon>Bacteria</taxon>
        <taxon>Bacillati</taxon>
        <taxon>Actinomycetota</taxon>
        <taxon>Actinomycetes</taxon>
        <taxon>Mycobacteriales</taxon>
        <taxon>Corynebacteriaceae</taxon>
        <taxon>Corynebacterium</taxon>
    </lineage>
</organism>
<proteinExistence type="inferred from homology"/>
<comment type="function">
    <text evidence="1">One of the essential components for the initiation of protein synthesis. Stabilizes the binding of IF-2 and IF-3 on the 30S subunit to which N-formylmethionyl-tRNA(fMet) subsequently binds. Helps modulate mRNA selection, yielding the 30S pre-initiation complex (PIC). Upon addition of the 50S ribosomal subunit IF-1, IF-2 and IF-3 are released leaving the mature 70S translation initiation complex.</text>
</comment>
<comment type="subunit">
    <text evidence="1">Component of the 30S ribosomal translation pre-initiation complex which assembles on the 30S ribosome in the order IF-2 and IF-3, IF-1 and N-formylmethionyl-tRNA(fMet); mRNA recruitment can occur at any time during PIC assembly.</text>
</comment>
<comment type="subcellular location">
    <subcellularLocation>
        <location evidence="1">Cytoplasm</location>
    </subcellularLocation>
</comment>
<comment type="similarity">
    <text evidence="1">Belongs to the IF-1 family.</text>
</comment>
<comment type="sequence caution" evidence="2">
    <conflict type="erroneous initiation">
        <sequence resource="EMBL-CDS" id="CAI37939"/>
    </conflict>
    <text>Extended N-terminus.</text>
</comment>
<dbReference type="EMBL" id="CR931997">
    <property type="protein sequence ID" value="CAI37939.1"/>
    <property type="status" value="ALT_INIT"/>
    <property type="molecule type" value="Genomic_DNA"/>
</dbReference>
<dbReference type="RefSeq" id="WP_003854422.1">
    <property type="nucleotide sequence ID" value="NC_007164.1"/>
</dbReference>
<dbReference type="SMR" id="Q4JTB8"/>
<dbReference type="STRING" id="306537.jk1762"/>
<dbReference type="GeneID" id="92759275"/>
<dbReference type="KEGG" id="cjk:jk1762"/>
<dbReference type="eggNOG" id="COG0361">
    <property type="taxonomic scope" value="Bacteria"/>
</dbReference>
<dbReference type="HOGENOM" id="CLU_151267_1_0_11"/>
<dbReference type="OrthoDB" id="9803250at2"/>
<dbReference type="Proteomes" id="UP000000545">
    <property type="component" value="Chromosome"/>
</dbReference>
<dbReference type="GO" id="GO:0005829">
    <property type="term" value="C:cytosol"/>
    <property type="evidence" value="ECO:0007669"/>
    <property type="project" value="TreeGrafter"/>
</dbReference>
<dbReference type="GO" id="GO:0043022">
    <property type="term" value="F:ribosome binding"/>
    <property type="evidence" value="ECO:0007669"/>
    <property type="project" value="UniProtKB-UniRule"/>
</dbReference>
<dbReference type="GO" id="GO:0019843">
    <property type="term" value="F:rRNA binding"/>
    <property type="evidence" value="ECO:0007669"/>
    <property type="project" value="UniProtKB-UniRule"/>
</dbReference>
<dbReference type="GO" id="GO:0003743">
    <property type="term" value="F:translation initiation factor activity"/>
    <property type="evidence" value="ECO:0007669"/>
    <property type="project" value="UniProtKB-UniRule"/>
</dbReference>
<dbReference type="CDD" id="cd04451">
    <property type="entry name" value="S1_IF1"/>
    <property type="match status" value="1"/>
</dbReference>
<dbReference type="FunFam" id="2.40.50.140:FF:000002">
    <property type="entry name" value="Translation initiation factor IF-1"/>
    <property type="match status" value="1"/>
</dbReference>
<dbReference type="Gene3D" id="2.40.50.140">
    <property type="entry name" value="Nucleic acid-binding proteins"/>
    <property type="match status" value="1"/>
</dbReference>
<dbReference type="HAMAP" id="MF_00075">
    <property type="entry name" value="IF_1"/>
    <property type="match status" value="1"/>
</dbReference>
<dbReference type="InterPro" id="IPR012340">
    <property type="entry name" value="NA-bd_OB-fold"/>
</dbReference>
<dbReference type="InterPro" id="IPR006196">
    <property type="entry name" value="RNA-binding_domain_S1_IF1"/>
</dbReference>
<dbReference type="InterPro" id="IPR003029">
    <property type="entry name" value="S1_domain"/>
</dbReference>
<dbReference type="InterPro" id="IPR004368">
    <property type="entry name" value="TIF_IF1"/>
</dbReference>
<dbReference type="NCBIfam" id="TIGR00008">
    <property type="entry name" value="infA"/>
    <property type="match status" value="1"/>
</dbReference>
<dbReference type="PANTHER" id="PTHR33370">
    <property type="entry name" value="TRANSLATION INITIATION FACTOR IF-1, CHLOROPLASTIC"/>
    <property type="match status" value="1"/>
</dbReference>
<dbReference type="PANTHER" id="PTHR33370:SF1">
    <property type="entry name" value="TRANSLATION INITIATION FACTOR IF-1, CHLOROPLASTIC"/>
    <property type="match status" value="1"/>
</dbReference>
<dbReference type="Pfam" id="PF01176">
    <property type="entry name" value="eIF-1a"/>
    <property type="match status" value="1"/>
</dbReference>
<dbReference type="SMART" id="SM00316">
    <property type="entry name" value="S1"/>
    <property type="match status" value="1"/>
</dbReference>
<dbReference type="SUPFAM" id="SSF50249">
    <property type="entry name" value="Nucleic acid-binding proteins"/>
    <property type="match status" value="1"/>
</dbReference>
<dbReference type="PROSITE" id="PS50832">
    <property type="entry name" value="S1_IF1_TYPE"/>
    <property type="match status" value="1"/>
</dbReference>